<reference key="1">
    <citation type="journal article" date="2003" name="Nature">
        <title>Unique physiological and pathogenic features of Leptospira interrogans revealed by whole-genome sequencing.</title>
        <authorList>
            <person name="Ren S.-X."/>
            <person name="Fu G."/>
            <person name="Jiang X.-G."/>
            <person name="Zeng R."/>
            <person name="Miao Y.-G."/>
            <person name="Xu H."/>
            <person name="Zhang Y.-X."/>
            <person name="Xiong H."/>
            <person name="Lu G."/>
            <person name="Lu L.-F."/>
            <person name="Jiang H.-Q."/>
            <person name="Jia J."/>
            <person name="Tu Y.-F."/>
            <person name="Jiang J.-X."/>
            <person name="Gu W.-Y."/>
            <person name="Zhang Y.-Q."/>
            <person name="Cai Z."/>
            <person name="Sheng H.-H."/>
            <person name="Yin H.-F."/>
            <person name="Zhang Y."/>
            <person name="Zhu G.-F."/>
            <person name="Wan M."/>
            <person name="Huang H.-L."/>
            <person name="Qian Z."/>
            <person name="Wang S.-Y."/>
            <person name="Ma W."/>
            <person name="Yao Z.-J."/>
            <person name="Shen Y."/>
            <person name="Qiang B.-Q."/>
            <person name="Xia Q.-C."/>
            <person name="Guo X.-K."/>
            <person name="Danchin A."/>
            <person name="Saint Girons I."/>
            <person name="Somerville R.L."/>
            <person name="Wen Y.-M."/>
            <person name="Shi M.-H."/>
            <person name="Chen Z."/>
            <person name="Xu J.-G."/>
            <person name="Zhao G.-P."/>
        </authorList>
    </citation>
    <scope>NUCLEOTIDE SEQUENCE [LARGE SCALE GENOMIC DNA]</scope>
    <source>
        <strain>56601</strain>
    </source>
</reference>
<keyword id="KW-0028">Amino-acid biosynthesis</keyword>
<keyword id="KW-0055">Arginine biosynthesis</keyword>
<keyword id="KW-0963">Cytoplasm</keyword>
<keyword id="KW-0456">Lyase</keyword>
<keyword id="KW-1185">Reference proteome</keyword>
<gene>
    <name evidence="1" type="primary">argH</name>
    <name type="ordered locus">LA_2076</name>
</gene>
<name>ARLY_LEPIN</name>
<proteinExistence type="inferred from homology"/>
<accession>Q8F4G5</accession>
<evidence type="ECO:0000255" key="1">
    <source>
        <dbReference type="HAMAP-Rule" id="MF_00006"/>
    </source>
</evidence>
<dbReference type="EC" id="4.3.2.1" evidence="1"/>
<dbReference type="EMBL" id="AE010300">
    <property type="protein sequence ID" value="AAN49275.1"/>
    <property type="molecule type" value="Genomic_DNA"/>
</dbReference>
<dbReference type="RefSeq" id="NP_712257.1">
    <property type="nucleotide sequence ID" value="NC_004342.2"/>
</dbReference>
<dbReference type="RefSeq" id="WP_000136475.1">
    <property type="nucleotide sequence ID" value="NC_004342.2"/>
</dbReference>
<dbReference type="SMR" id="Q8F4G5"/>
<dbReference type="FunCoup" id="Q8F4G5">
    <property type="interactions" value="440"/>
</dbReference>
<dbReference type="STRING" id="189518.LA_2076"/>
<dbReference type="PaxDb" id="189518-LA_2076"/>
<dbReference type="EnsemblBacteria" id="AAN49275">
    <property type="protein sequence ID" value="AAN49275"/>
    <property type="gene ID" value="LA_2076"/>
</dbReference>
<dbReference type="GeneID" id="61141737"/>
<dbReference type="KEGG" id="lil:LA_2076"/>
<dbReference type="PATRIC" id="fig|189518.3.peg.2071"/>
<dbReference type="HOGENOM" id="CLU_027272_2_3_12"/>
<dbReference type="InParanoid" id="Q8F4G5"/>
<dbReference type="OrthoDB" id="9769623at2"/>
<dbReference type="UniPathway" id="UPA00068">
    <property type="reaction ID" value="UER00114"/>
</dbReference>
<dbReference type="Proteomes" id="UP000001408">
    <property type="component" value="Chromosome I"/>
</dbReference>
<dbReference type="GO" id="GO:0005829">
    <property type="term" value="C:cytosol"/>
    <property type="evidence" value="ECO:0000318"/>
    <property type="project" value="GO_Central"/>
</dbReference>
<dbReference type="GO" id="GO:0004056">
    <property type="term" value="F:argininosuccinate lyase activity"/>
    <property type="evidence" value="ECO:0000318"/>
    <property type="project" value="GO_Central"/>
</dbReference>
<dbReference type="GO" id="GO:0042450">
    <property type="term" value="P:arginine biosynthetic process via ornithine"/>
    <property type="evidence" value="ECO:0000318"/>
    <property type="project" value="GO_Central"/>
</dbReference>
<dbReference type="GO" id="GO:0006526">
    <property type="term" value="P:L-arginine biosynthetic process"/>
    <property type="evidence" value="ECO:0007669"/>
    <property type="project" value="UniProtKB-UniRule"/>
</dbReference>
<dbReference type="CDD" id="cd01359">
    <property type="entry name" value="Argininosuccinate_lyase"/>
    <property type="match status" value="1"/>
</dbReference>
<dbReference type="FunFam" id="1.10.275.10:FF:000002">
    <property type="entry name" value="Argininosuccinate lyase"/>
    <property type="match status" value="1"/>
</dbReference>
<dbReference type="FunFam" id="1.10.40.30:FF:000001">
    <property type="entry name" value="Argininosuccinate lyase"/>
    <property type="match status" value="1"/>
</dbReference>
<dbReference type="FunFam" id="1.20.200.10:FF:000015">
    <property type="entry name" value="argininosuccinate lyase isoform X2"/>
    <property type="match status" value="1"/>
</dbReference>
<dbReference type="Gene3D" id="1.10.40.30">
    <property type="entry name" value="Fumarase/aspartase (C-terminal domain)"/>
    <property type="match status" value="1"/>
</dbReference>
<dbReference type="Gene3D" id="1.20.200.10">
    <property type="entry name" value="Fumarase/aspartase (Central domain)"/>
    <property type="match status" value="1"/>
</dbReference>
<dbReference type="Gene3D" id="1.10.275.10">
    <property type="entry name" value="Fumarase/aspartase (N-terminal domain)"/>
    <property type="match status" value="1"/>
</dbReference>
<dbReference type="HAMAP" id="MF_00006">
    <property type="entry name" value="Arg_succ_lyase"/>
    <property type="match status" value="1"/>
</dbReference>
<dbReference type="InterPro" id="IPR029419">
    <property type="entry name" value="Arg_succ_lyase_C"/>
</dbReference>
<dbReference type="InterPro" id="IPR009049">
    <property type="entry name" value="Argininosuccinate_lyase"/>
</dbReference>
<dbReference type="InterPro" id="IPR024083">
    <property type="entry name" value="Fumarase/histidase_N"/>
</dbReference>
<dbReference type="InterPro" id="IPR020557">
    <property type="entry name" value="Fumarate_lyase_CS"/>
</dbReference>
<dbReference type="InterPro" id="IPR000362">
    <property type="entry name" value="Fumarate_lyase_fam"/>
</dbReference>
<dbReference type="InterPro" id="IPR022761">
    <property type="entry name" value="Fumarate_lyase_N"/>
</dbReference>
<dbReference type="InterPro" id="IPR008948">
    <property type="entry name" value="L-Aspartase-like"/>
</dbReference>
<dbReference type="NCBIfam" id="TIGR00838">
    <property type="entry name" value="argH"/>
    <property type="match status" value="1"/>
</dbReference>
<dbReference type="PANTHER" id="PTHR43814">
    <property type="entry name" value="ARGININOSUCCINATE LYASE"/>
    <property type="match status" value="1"/>
</dbReference>
<dbReference type="PANTHER" id="PTHR43814:SF1">
    <property type="entry name" value="ARGININOSUCCINATE LYASE"/>
    <property type="match status" value="1"/>
</dbReference>
<dbReference type="Pfam" id="PF14698">
    <property type="entry name" value="ASL_C2"/>
    <property type="match status" value="1"/>
</dbReference>
<dbReference type="Pfam" id="PF00206">
    <property type="entry name" value="Lyase_1"/>
    <property type="match status" value="1"/>
</dbReference>
<dbReference type="PRINTS" id="PR00145">
    <property type="entry name" value="ARGSUCLYASE"/>
</dbReference>
<dbReference type="PRINTS" id="PR00149">
    <property type="entry name" value="FUMRATELYASE"/>
</dbReference>
<dbReference type="SUPFAM" id="SSF48557">
    <property type="entry name" value="L-aspartase-like"/>
    <property type="match status" value="1"/>
</dbReference>
<dbReference type="PROSITE" id="PS00163">
    <property type="entry name" value="FUMARATE_LYASES"/>
    <property type="match status" value="1"/>
</dbReference>
<comment type="catalytic activity">
    <reaction evidence="1">
        <text>2-(N(omega)-L-arginino)succinate = fumarate + L-arginine</text>
        <dbReference type="Rhea" id="RHEA:24020"/>
        <dbReference type="ChEBI" id="CHEBI:29806"/>
        <dbReference type="ChEBI" id="CHEBI:32682"/>
        <dbReference type="ChEBI" id="CHEBI:57472"/>
        <dbReference type="EC" id="4.3.2.1"/>
    </reaction>
</comment>
<comment type="pathway">
    <text evidence="1">Amino-acid biosynthesis; L-arginine biosynthesis; L-arginine from L-ornithine and carbamoyl phosphate: step 3/3.</text>
</comment>
<comment type="subcellular location">
    <subcellularLocation>
        <location evidence="1">Cytoplasm</location>
    </subcellularLocation>
</comment>
<comment type="similarity">
    <text evidence="1">Belongs to the lyase 1 family. Argininosuccinate lyase subfamily.</text>
</comment>
<organism>
    <name type="scientific">Leptospira interrogans serogroup Icterohaemorrhagiae serovar Lai (strain 56601)</name>
    <dbReference type="NCBI Taxonomy" id="189518"/>
    <lineage>
        <taxon>Bacteria</taxon>
        <taxon>Pseudomonadati</taxon>
        <taxon>Spirochaetota</taxon>
        <taxon>Spirochaetia</taxon>
        <taxon>Leptospirales</taxon>
        <taxon>Leptospiraceae</taxon>
        <taxon>Leptospira</taxon>
    </lineage>
</organism>
<sequence>MTEKEKKLWGGRFQENASSILERIGQSISFDHKLYKEDIQGSIAHARMLKQIGILNSEELSKIEIALAQIKTELEEGKFEFKSELEDIHMHIEFRLTELIGETGKKLHTARSRNDQVTQDVRLYILNQGKEILKSIINLRSSLYQKAKQSLDVIIPGYTHLQIAQPIRASQYLLSWFWALERDQEFFRFAFKASEELALGSGAMAGVNYPTDREFLKKELGLSKVSPNSMDGVSSRDHILEFLFACTQLMIHVSRICEDIILYSSQEFGILKLPDSLTTGSSIMPQKKNPDIAELIRGKSGRVIGNLNHLLVMLKGLPSTYNRDLQEDKLALFDSIETVQISLEGIREMIEGWIWIPERAEVSLKNGFATATDLADFLVNEKKIPFRTAHELVGTLVGVCVKQKKTLFDLPESDRVSISKYFVGKEYEDAVSLSLSADKKISYGGTSKKRQEEQLKIALDSLKEAERLFL</sequence>
<protein>
    <recommendedName>
        <fullName evidence="1">Argininosuccinate lyase</fullName>
        <shortName evidence="1">ASAL</shortName>
        <ecNumber evidence="1">4.3.2.1</ecNumber>
    </recommendedName>
    <alternativeName>
        <fullName evidence="1">Arginosuccinase</fullName>
    </alternativeName>
</protein>
<feature type="chain" id="PRO_0000137784" description="Argininosuccinate lyase">
    <location>
        <begin position="1"/>
        <end position="470"/>
    </location>
</feature>